<comment type="function">
    <text evidence="1">Binds to 23S rRNA. Forms part of two intersubunit bridges in the 70S ribosome.</text>
</comment>
<comment type="subunit">
    <text evidence="1">Part of the 50S ribosomal subunit. Forms a cluster with proteins L3 and L19. In the 70S ribosome, L14 and L19 interact and together make contacts with the 16S rRNA in bridges B5 and B8.</text>
</comment>
<comment type="similarity">
    <text evidence="1">Belongs to the universal ribosomal protein uL14 family.</text>
</comment>
<keyword id="KW-0687">Ribonucleoprotein</keyword>
<keyword id="KW-0689">Ribosomal protein</keyword>
<keyword id="KW-0694">RNA-binding</keyword>
<keyword id="KW-0699">rRNA-binding</keyword>
<gene>
    <name evidence="1" type="primary">rplN</name>
    <name type="ordered locus">Sare_4305</name>
</gene>
<proteinExistence type="inferred from homology"/>
<sequence>MIQQESRLRVADNTGAREILCIRVLGGSGRRYASIGDVIVATVKDAIPGAGVKKGDVVKAVVVRTAKEKRRPDGSYIRFDENAAVIIKDGGDPRGTRIFGPVGRELRDKRFMKIISLAPEVL</sequence>
<reference key="1">
    <citation type="submission" date="2007-10" db="EMBL/GenBank/DDBJ databases">
        <title>Complete sequence of Salinispora arenicola CNS-205.</title>
        <authorList>
            <consortium name="US DOE Joint Genome Institute"/>
            <person name="Copeland A."/>
            <person name="Lucas S."/>
            <person name="Lapidus A."/>
            <person name="Barry K."/>
            <person name="Glavina del Rio T."/>
            <person name="Dalin E."/>
            <person name="Tice H."/>
            <person name="Pitluck S."/>
            <person name="Foster B."/>
            <person name="Schmutz J."/>
            <person name="Larimer F."/>
            <person name="Land M."/>
            <person name="Hauser L."/>
            <person name="Kyrpides N."/>
            <person name="Ivanova N."/>
            <person name="Jensen P.R."/>
            <person name="Moore B.S."/>
            <person name="Penn K."/>
            <person name="Jenkins C."/>
            <person name="Udwary D."/>
            <person name="Xiang L."/>
            <person name="Gontang E."/>
            <person name="Richardson P."/>
        </authorList>
    </citation>
    <scope>NUCLEOTIDE SEQUENCE [LARGE SCALE GENOMIC DNA]</scope>
    <source>
        <strain>CNS-205</strain>
    </source>
</reference>
<accession>A8M519</accession>
<protein>
    <recommendedName>
        <fullName evidence="1">Large ribosomal subunit protein uL14</fullName>
    </recommendedName>
    <alternativeName>
        <fullName evidence="2">50S ribosomal protein L14</fullName>
    </alternativeName>
</protein>
<organism>
    <name type="scientific">Salinispora arenicola (strain CNS-205)</name>
    <dbReference type="NCBI Taxonomy" id="391037"/>
    <lineage>
        <taxon>Bacteria</taxon>
        <taxon>Bacillati</taxon>
        <taxon>Actinomycetota</taxon>
        <taxon>Actinomycetes</taxon>
        <taxon>Micromonosporales</taxon>
        <taxon>Micromonosporaceae</taxon>
        <taxon>Salinispora</taxon>
    </lineage>
</organism>
<dbReference type="EMBL" id="CP000850">
    <property type="protein sequence ID" value="ABW00087.1"/>
    <property type="molecule type" value="Genomic_DNA"/>
</dbReference>
<dbReference type="SMR" id="A8M519"/>
<dbReference type="STRING" id="391037.Sare_4305"/>
<dbReference type="KEGG" id="saq:Sare_4305"/>
<dbReference type="eggNOG" id="COG0093">
    <property type="taxonomic scope" value="Bacteria"/>
</dbReference>
<dbReference type="HOGENOM" id="CLU_095071_2_1_11"/>
<dbReference type="OrthoDB" id="9806379at2"/>
<dbReference type="GO" id="GO:0022625">
    <property type="term" value="C:cytosolic large ribosomal subunit"/>
    <property type="evidence" value="ECO:0007669"/>
    <property type="project" value="TreeGrafter"/>
</dbReference>
<dbReference type="GO" id="GO:0070180">
    <property type="term" value="F:large ribosomal subunit rRNA binding"/>
    <property type="evidence" value="ECO:0007669"/>
    <property type="project" value="TreeGrafter"/>
</dbReference>
<dbReference type="GO" id="GO:0003735">
    <property type="term" value="F:structural constituent of ribosome"/>
    <property type="evidence" value="ECO:0007669"/>
    <property type="project" value="InterPro"/>
</dbReference>
<dbReference type="GO" id="GO:0006412">
    <property type="term" value="P:translation"/>
    <property type="evidence" value="ECO:0007669"/>
    <property type="project" value="UniProtKB-UniRule"/>
</dbReference>
<dbReference type="CDD" id="cd00337">
    <property type="entry name" value="Ribosomal_uL14"/>
    <property type="match status" value="1"/>
</dbReference>
<dbReference type="FunFam" id="2.40.150.20:FF:000001">
    <property type="entry name" value="50S ribosomal protein L14"/>
    <property type="match status" value="1"/>
</dbReference>
<dbReference type="Gene3D" id="2.40.150.20">
    <property type="entry name" value="Ribosomal protein L14"/>
    <property type="match status" value="1"/>
</dbReference>
<dbReference type="HAMAP" id="MF_01367">
    <property type="entry name" value="Ribosomal_uL14"/>
    <property type="match status" value="1"/>
</dbReference>
<dbReference type="InterPro" id="IPR000218">
    <property type="entry name" value="Ribosomal_uL14"/>
</dbReference>
<dbReference type="InterPro" id="IPR005745">
    <property type="entry name" value="Ribosomal_uL14_bac-type"/>
</dbReference>
<dbReference type="InterPro" id="IPR019972">
    <property type="entry name" value="Ribosomal_uL14_CS"/>
</dbReference>
<dbReference type="InterPro" id="IPR036853">
    <property type="entry name" value="Ribosomal_uL14_sf"/>
</dbReference>
<dbReference type="NCBIfam" id="TIGR01067">
    <property type="entry name" value="rplN_bact"/>
    <property type="match status" value="1"/>
</dbReference>
<dbReference type="PANTHER" id="PTHR11761">
    <property type="entry name" value="50S/60S RIBOSOMAL PROTEIN L14/L23"/>
    <property type="match status" value="1"/>
</dbReference>
<dbReference type="PANTHER" id="PTHR11761:SF3">
    <property type="entry name" value="LARGE RIBOSOMAL SUBUNIT PROTEIN UL14M"/>
    <property type="match status" value="1"/>
</dbReference>
<dbReference type="Pfam" id="PF00238">
    <property type="entry name" value="Ribosomal_L14"/>
    <property type="match status" value="1"/>
</dbReference>
<dbReference type="SMART" id="SM01374">
    <property type="entry name" value="Ribosomal_L14"/>
    <property type="match status" value="1"/>
</dbReference>
<dbReference type="SUPFAM" id="SSF50193">
    <property type="entry name" value="Ribosomal protein L14"/>
    <property type="match status" value="1"/>
</dbReference>
<dbReference type="PROSITE" id="PS00049">
    <property type="entry name" value="RIBOSOMAL_L14"/>
    <property type="match status" value="1"/>
</dbReference>
<evidence type="ECO:0000255" key="1">
    <source>
        <dbReference type="HAMAP-Rule" id="MF_01367"/>
    </source>
</evidence>
<evidence type="ECO:0000305" key="2"/>
<name>RL14_SALAI</name>
<feature type="chain" id="PRO_1000087143" description="Large ribosomal subunit protein uL14">
    <location>
        <begin position="1"/>
        <end position="122"/>
    </location>
</feature>